<sequence length="500" mass="53991">MSTANQKPTESVSLNAFKQPKAFYLIFSIELWERFGYYGLQGIMAVYLVKQLGMSEADSITLFSSFSALVYGLVAIGGWLGDKVLGTKRVIMLGAIVLAIGYALVAWSGHDAGIVYMGMAAIAVGNGLFKANPSSLLSTCYEKNDPRLDGAFTMYYMSVNIGSFFSMIATPWLAAKYGWSVAFALSVVGLLITIVNFAFCQRWVKQYGSKPDFEPINYRNLLLTIIGVVALIAIATWLLHNQEVARMALGVVAFGIVVIFGKEAFAMKGAARRKMIVAFILMLEAIIFFVLYSQMPTSLNFFAIRNVEHSILGLAVEPEQYQALNPFWIIIGSPILAAIYNKMGDTLPMPTKFAIGMVMCSGAFLILPLGAKFASDAGIVSVSWLVASYGLQSIGELMISGLGLAMVAQLVPQRLMGFIMGSWFLTTAGANLIGGYVAGMMAVPDNVTDPLMSLEVYGRVFLQIGVATAVIAVLMLLTAPKLHRMTQDDAADKAAKAAVA</sequence>
<reference key="1">
    <citation type="journal article" date="1996" name="DNA Res.">
        <title>A 570-kb DNA sequence of the Escherichia coli K-12 genome corresponding to the 28.0-40.1 min region on the linkage map.</title>
        <authorList>
            <person name="Aiba H."/>
            <person name="Baba T."/>
            <person name="Fujita K."/>
            <person name="Hayashi K."/>
            <person name="Inada T."/>
            <person name="Isono K."/>
            <person name="Itoh T."/>
            <person name="Kasai H."/>
            <person name="Kashimoto K."/>
            <person name="Kimura S."/>
            <person name="Kitakawa M."/>
            <person name="Kitagawa M."/>
            <person name="Makino K."/>
            <person name="Miki T."/>
            <person name="Mizobuchi K."/>
            <person name="Mori H."/>
            <person name="Mori T."/>
            <person name="Motomura K."/>
            <person name="Nakade S."/>
            <person name="Nakamura Y."/>
            <person name="Nashimoto H."/>
            <person name="Nishio Y."/>
            <person name="Oshima T."/>
            <person name="Saito N."/>
            <person name="Sampei G."/>
            <person name="Seki Y."/>
            <person name="Sivasundaram S."/>
            <person name="Tagami H."/>
            <person name="Takeda J."/>
            <person name="Takemoto K."/>
            <person name="Takeuchi Y."/>
            <person name="Wada C."/>
            <person name="Yamamoto Y."/>
            <person name="Horiuchi T."/>
        </authorList>
    </citation>
    <scope>NUCLEOTIDE SEQUENCE [LARGE SCALE GENOMIC DNA]</scope>
    <source>
        <strain>K12 / W3110 / ATCC 27325 / DSM 5911</strain>
    </source>
</reference>
<reference key="2">
    <citation type="journal article" date="1997" name="Science">
        <title>The complete genome sequence of Escherichia coli K-12.</title>
        <authorList>
            <person name="Blattner F.R."/>
            <person name="Plunkett G. III"/>
            <person name="Bloch C.A."/>
            <person name="Perna N.T."/>
            <person name="Burland V."/>
            <person name="Riley M."/>
            <person name="Collado-Vides J."/>
            <person name="Glasner J.D."/>
            <person name="Rode C.K."/>
            <person name="Mayhew G.F."/>
            <person name="Gregor J."/>
            <person name="Davis N.W."/>
            <person name="Kirkpatrick H.A."/>
            <person name="Goeden M.A."/>
            <person name="Rose D.J."/>
            <person name="Mau B."/>
            <person name="Shao Y."/>
        </authorList>
    </citation>
    <scope>NUCLEOTIDE SEQUENCE [LARGE SCALE GENOMIC DNA]</scope>
    <source>
        <strain>K12 / MG1655 / ATCC 47076</strain>
    </source>
</reference>
<reference key="3">
    <citation type="journal article" date="2006" name="Mol. Syst. Biol.">
        <title>Highly accurate genome sequences of Escherichia coli K-12 strains MG1655 and W3110.</title>
        <authorList>
            <person name="Hayashi K."/>
            <person name="Morooka N."/>
            <person name="Yamamoto Y."/>
            <person name="Fujita K."/>
            <person name="Isono K."/>
            <person name="Choi S."/>
            <person name="Ohtsubo E."/>
            <person name="Baba T."/>
            <person name="Wanner B.L."/>
            <person name="Mori H."/>
            <person name="Horiuchi T."/>
        </authorList>
    </citation>
    <scope>NUCLEOTIDE SEQUENCE [LARGE SCALE GENOMIC DNA]</scope>
    <source>
        <strain>K12 / W3110 / ATCC 27325 / DSM 5911</strain>
    </source>
</reference>
<reference key="4">
    <citation type="journal article" date="2004" name="J. Bacteriol.">
        <title>The Escherichia coli tppB (ydgR) gene represents a new class of OmpR-regulated genes.</title>
        <authorList>
            <person name="Goh E.B."/>
            <person name="Siino D.F."/>
            <person name="Igo M.M."/>
        </authorList>
    </citation>
    <scope>FUNCTION</scope>
    <scope>INDUCTION</scope>
    <source>
        <strain>K12</strain>
    </source>
</reference>
<reference key="5">
    <citation type="journal article" date="2005" name="Science">
        <title>Global topology analysis of the Escherichia coli inner membrane proteome.</title>
        <authorList>
            <person name="Daley D.O."/>
            <person name="Rapp M."/>
            <person name="Granseth E."/>
            <person name="Melen K."/>
            <person name="Drew D."/>
            <person name="von Heijne G."/>
        </authorList>
    </citation>
    <scope>TOPOLOGY [LARGE SCALE ANALYSIS]</scope>
    <source>
        <strain>K12 / MG1655 / ATCC 47076</strain>
    </source>
</reference>
<reference key="6">
    <citation type="journal article" date="2007" name="J. Biol. Chem.">
        <title>Functional and structural characterization of a prokaryotic peptide transporter with features similar to mammalian PEPT1.</title>
        <authorList>
            <person name="Weitz D."/>
            <person name="Harder D."/>
            <person name="Casagrande F."/>
            <person name="Fotiadis D."/>
            <person name="Obrdlik P."/>
            <person name="Kelety B."/>
            <person name="Daniel H."/>
        </authorList>
    </citation>
    <scope>FUNCTION IN PEPTIDE TRANSPORT</scope>
    <scope>SUBCELLULAR LOCATION</scope>
    <scope>SUBUNIT</scope>
</reference>
<reference key="7">
    <citation type="journal article" date="2008" name="FEBS J.">
        <title>DtpB (YhiP) and DtpA (TppB, YdgR) are prototypical proton-dependent peptide transporters of Escherichia coli.</title>
        <authorList>
            <person name="Harder D."/>
            <person name="Stolz J."/>
            <person name="Casagrande F."/>
            <person name="Obrdlik P."/>
            <person name="Weitz D."/>
            <person name="Fotiadis D."/>
            <person name="Daniel H."/>
        </authorList>
    </citation>
    <scope>FUNCTION</scope>
</reference>
<evidence type="ECO:0000255" key="1"/>
<evidence type="ECO:0000269" key="2">
    <source>
    </source>
</evidence>
<evidence type="ECO:0000269" key="3">
    <source>
    </source>
</evidence>
<evidence type="ECO:0000269" key="4">
    <source>
    </source>
</evidence>
<evidence type="ECO:0000305" key="5"/>
<evidence type="ECO:0007829" key="6">
    <source>
        <dbReference type="PDB" id="6GS4"/>
    </source>
</evidence>
<comment type="function">
    <text evidence="2 3 4">Proton-dependent permease that transports di- and tripeptides as well as structurally related peptidomimetics such as aminocephalosporins into the cell. Has a clear preference for dipeptides and tripeptides composed of L-amino acids, and discriminates dipeptides on the basis of the position of charges within the substrate.</text>
</comment>
<comment type="subunit">
    <text evidence="3 5">Monomer (Probable). Has a crown-like structure with a diameter of 8 nm and a central density.</text>
</comment>
<comment type="subcellular location">
    <subcellularLocation>
        <location evidence="5">Cell inner membrane</location>
        <topology evidence="5">Multi-pass membrane protein</topology>
    </subcellularLocation>
</comment>
<comment type="induction">
    <text evidence="2">Transcriptionally activated by the EnvZ/OmpR regulatory system.</text>
</comment>
<comment type="similarity">
    <text evidence="5">Belongs to the major facilitator superfamily. Proton-dependent oligopeptide transporter (POT/PTR) (TC 2.A.17) family. DtpA subfamily.</text>
</comment>
<organism>
    <name type="scientific">Escherichia coli (strain K12)</name>
    <dbReference type="NCBI Taxonomy" id="83333"/>
    <lineage>
        <taxon>Bacteria</taxon>
        <taxon>Pseudomonadati</taxon>
        <taxon>Pseudomonadota</taxon>
        <taxon>Gammaproteobacteria</taxon>
        <taxon>Enterobacterales</taxon>
        <taxon>Enterobacteriaceae</taxon>
        <taxon>Escherichia</taxon>
    </lineage>
</organism>
<accession>P77304</accession>
<protein>
    <recommendedName>
        <fullName>Dipeptide and tripeptide permease A</fullName>
    </recommendedName>
</protein>
<gene>
    <name type="primary">dtpA</name>
    <name type="synonym">tppB</name>
    <name type="synonym">ydgR</name>
    <name type="ordered locus">b1634</name>
    <name type="ordered locus">JW1626</name>
</gene>
<name>DTPA_ECOLI</name>
<feature type="chain" id="PRO_0000064323" description="Dipeptide and tripeptide permease A">
    <location>
        <begin position="1"/>
        <end position="500"/>
    </location>
</feature>
<feature type="topological domain" description="Cytoplasmic" evidence="1">
    <location>
        <begin position="1"/>
        <end position="21"/>
    </location>
</feature>
<feature type="transmembrane region" description="Helical" evidence="1">
    <location>
        <begin position="22"/>
        <end position="44"/>
    </location>
</feature>
<feature type="topological domain" description="Periplasmic" evidence="1">
    <location>
        <begin position="45"/>
        <end position="59"/>
    </location>
</feature>
<feature type="transmembrane region" description="Helical" evidence="1">
    <location>
        <begin position="60"/>
        <end position="80"/>
    </location>
</feature>
<feature type="topological domain" description="Cytoplasmic" evidence="1">
    <location>
        <begin position="81"/>
        <end position="89"/>
    </location>
</feature>
<feature type="transmembrane region" description="Helical" evidence="1">
    <location>
        <begin position="90"/>
        <end position="110"/>
    </location>
</feature>
<feature type="topological domain" description="Periplasmic" evidence="1">
    <location>
        <position position="111"/>
    </location>
</feature>
<feature type="transmembrane region" description="Helical" evidence="1">
    <location>
        <begin position="112"/>
        <end position="132"/>
    </location>
</feature>
<feature type="topological domain" description="Cytoplasmic" evidence="1">
    <location>
        <begin position="133"/>
        <end position="153"/>
    </location>
</feature>
<feature type="transmembrane region" description="Helical" evidence="1">
    <location>
        <begin position="154"/>
        <end position="174"/>
    </location>
</feature>
<feature type="topological domain" description="Periplasmic" evidence="1">
    <location>
        <begin position="175"/>
        <end position="178"/>
    </location>
</feature>
<feature type="transmembrane region" description="Helical" evidence="1">
    <location>
        <begin position="179"/>
        <end position="199"/>
    </location>
</feature>
<feature type="topological domain" description="Cytoplasmic" evidence="1">
    <location>
        <begin position="200"/>
        <end position="219"/>
    </location>
</feature>
<feature type="transmembrane region" description="Helical" evidence="1">
    <location>
        <begin position="220"/>
        <end position="240"/>
    </location>
</feature>
<feature type="topological domain" description="Periplasmic" evidence="1">
    <location>
        <begin position="241"/>
        <end position="246"/>
    </location>
</feature>
<feature type="transmembrane region" description="Helical" evidence="1">
    <location>
        <begin position="247"/>
        <end position="267"/>
    </location>
</feature>
<feature type="topological domain" description="Cytoplasmic" evidence="1">
    <location>
        <begin position="268"/>
        <end position="274"/>
    </location>
</feature>
<feature type="transmembrane region" description="Helical" evidence="1">
    <location>
        <begin position="275"/>
        <end position="295"/>
    </location>
</feature>
<feature type="topological domain" description="Periplasmic" evidence="1">
    <location>
        <begin position="296"/>
        <end position="320"/>
    </location>
</feature>
<feature type="transmembrane region" description="Helical" evidence="1">
    <location>
        <begin position="321"/>
        <end position="341"/>
    </location>
</feature>
<feature type="topological domain" description="Cytoplasmic" evidence="1">
    <location>
        <begin position="342"/>
        <end position="352"/>
    </location>
</feature>
<feature type="transmembrane region" description="Helical" evidence="1">
    <location>
        <begin position="353"/>
        <end position="373"/>
    </location>
</feature>
<feature type="topological domain" description="Periplasmic" evidence="1">
    <location>
        <begin position="374"/>
        <end position="378"/>
    </location>
</feature>
<feature type="transmembrane region" description="Helical" evidence="1">
    <location>
        <begin position="379"/>
        <end position="399"/>
    </location>
</feature>
<feature type="topological domain" description="Cytoplasmic" evidence="1">
    <location>
        <begin position="400"/>
        <end position="414"/>
    </location>
</feature>
<feature type="transmembrane region" description="Helical" evidence="1">
    <location>
        <begin position="415"/>
        <end position="435"/>
    </location>
</feature>
<feature type="topological domain" description="Periplasmic" evidence="1">
    <location>
        <begin position="436"/>
        <end position="459"/>
    </location>
</feature>
<feature type="transmembrane region" description="Helical" evidence="1">
    <location>
        <begin position="460"/>
        <end position="480"/>
    </location>
</feature>
<feature type="topological domain" description="Cytoplasmic" evidence="1">
    <location>
        <begin position="481"/>
        <end position="500"/>
    </location>
</feature>
<feature type="helix" evidence="6">
    <location>
        <begin position="21"/>
        <end position="50"/>
    </location>
</feature>
<feature type="helix" evidence="6">
    <location>
        <begin position="56"/>
        <end position="72"/>
    </location>
</feature>
<feature type="helix" evidence="6">
    <location>
        <begin position="74"/>
        <end position="83"/>
    </location>
</feature>
<feature type="helix" evidence="6">
    <location>
        <begin position="87"/>
        <end position="106"/>
    </location>
</feature>
<feature type="helix" evidence="6">
    <location>
        <begin position="112"/>
        <end position="129"/>
    </location>
</feature>
<feature type="helix" evidence="6">
    <location>
        <begin position="132"/>
        <end position="138"/>
    </location>
</feature>
<feature type="helix" evidence="6">
    <location>
        <begin position="147"/>
        <end position="176"/>
    </location>
</feature>
<feature type="helix" evidence="6">
    <location>
        <begin position="179"/>
        <end position="199"/>
    </location>
</feature>
<feature type="helix" evidence="6">
    <location>
        <begin position="201"/>
        <end position="204"/>
    </location>
</feature>
<feature type="helix" evidence="6">
    <location>
        <begin position="210"/>
        <end position="213"/>
    </location>
</feature>
<feature type="helix" evidence="6">
    <location>
        <begin position="218"/>
        <end position="240"/>
    </location>
</feature>
<feature type="helix" evidence="6">
    <location>
        <begin position="242"/>
        <end position="266"/>
    </location>
</feature>
<feature type="helix" evidence="6">
    <location>
        <begin position="269"/>
        <end position="292"/>
    </location>
</feature>
<feature type="turn" evidence="6">
    <location>
        <begin position="293"/>
        <end position="297"/>
    </location>
</feature>
<feature type="helix" evidence="6">
    <location>
        <begin position="298"/>
        <end position="306"/>
    </location>
</feature>
<feature type="strand" evidence="6">
    <location>
        <begin position="309"/>
        <end position="311"/>
    </location>
</feature>
<feature type="helix" evidence="6">
    <location>
        <begin position="318"/>
        <end position="323"/>
    </location>
</feature>
<feature type="helix" evidence="6">
    <location>
        <begin position="324"/>
        <end position="340"/>
    </location>
</feature>
<feature type="helix" evidence="6">
    <location>
        <begin position="349"/>
        <end position="372"/>
    </location>
</feature>
<feature type="helix" evidence="6">
    <location>
        <begin position="382"/>
        <end position="398"/>
    </location>
</feature>
<feature type="helix" evidence="6">
    <location>
        <begin position="399"/>
        <end position="401"/>
    </location>
</feature>
<feature type="helix" evidence="6">
    <location>
        <begin position="404"/>
        <end position="409"/>
    </location>
</feature>
<feature type="helix" evidence="6">
    <location>
        <begin position="413"/>
        <end position="415"/>
    </location>
</feature>
<feature type="helix" evidence="6">
    <location>
        <begin position="416"/>
        <end position="439"/>
    </location>
</feature>
<feature type="strand" evidence="6">
    <location>
        <begin position="444"/>
        <end position="447"/>
    </location>
</feature>
<feature type="helix" evidence="6">
    <location>
        <begin position="450"/>
        <end position="485"/>
    </location>
</feature>
<proteinExistence type="evidence at protein level"/>
<keyword id="KW-0002">3D-structure</keyword>
<keyword id="KW-0997">Cell inner membrane</keyword>
<keyword id="KW-1003">Cell membrane</keyword>
<keyword id="KW-0472">Membrane</keyword>
<keyword id="KW-0571">Peptide transport</keyword>
<keyword id="KW-0653">Protein transport</keyword>
<keyword id="KW-1185">Reference proteome</keyword>
<keyword id="KW-0812">Transmembrane</keyword>
<keyword id="KW-1133">Transmembrane helix</keyword>
<keyword id="KW-0813">Transport</keyword>
<dbReference type="EMBL" id="U00096">
    <property type="protein sequence ID" value="AAC74706.1"/>
    <property type="molecule type" value="Genomic_DNA"/>
</dbReference>
<dbReference type="EMBL" id="AP009048">
    <property type="protein sequence ID" value="BAA15395.1"/>
    <property type="molecule type" value="Genomic_DNA"/>
</dbReference>
<dbReference type="PIR" id="D64920">
    <property type="entry name" value="D64920"/>
</dbReference>
<dbReference type="RefSeq" id="NP_416151.1">
    <property type="nucleotide sequence ID" value="NC_000913.3"/>
</dbReference>
<dbReference type="RefSeq" id="WP_000100932.1">
    <property type="nucleotide sequence ID" value="NZ_STEB01000003.1"/>
</dbReference>
<dbReference type="PDB" id="6GS1">
    <property type="method" value="X-ray"/>
    <property type="resolution" value="3.29 A"/>
    <property type="chains" value="A=2-500"/>
</dbReference>
<dbReference type="PDB" id="6GS4">
    <property type="method" value="X-ray"/>
    <property type="resolution" value="2.65 A"/>
    <property type="chains" value="A=2-500"/>
</dbReference>
<dbReference type="PDB" id="6GS7">
    <property type="method" value="X-ray"/>
    <property type="resolution" value="3.30 A"/>
    <property type="chains" value="A=2-500"/>
</dbReference>
<dbReference type="PDBsum" id="6GS1"/>
<dbReference type="PDBsum" id="6GS4"/>
<dbReference type="PDBsum" id="6GS7"/>
<dbReference type="SASBDB" id="P77304"/>
<dbReference type="SMR" id="P77304"/>
<dbReference type="BioGRID" id="4260260">
    <property type="interactions" value="254"/>
</dbReference>
<dbReference type="FunCoup" id="P77304">
    <property type="interactions" value="208"/>
</dbReference>
<dbReference type="STRING" id="511145.b1634"/>
<dbReference type="TCDB" id="2.A.17.1.2">
    <property type="family name" value="the proton-dependent oligopeptide transporter (pot/ptr) family"/>
</dbReference>
<dbReference type="jPOST" id="P77304"/>
<dbReference type="PaxDb" id="511145-b1634"/>
<dbReference type="ABCD" id="P77304">
    <property type="antibodies" value="5 sequenced antibodies"/>
</dbReference>
<dbReference type="EnsemblBacteria" id="AAC74706">
    <property type="protein sequence ID" value="AAC74706"/>
    <property type="gene ID" value="b1634"/>
</dbReference>
<dbReference type="GeneID" id="947436"/>
<dbReference type="KEGG" id="ecj:JW1626"/>
<dbReference type="KEGG" id="eco:b1634"/>
<dbReference type="KEGG" id="ecoc:C3026_09390"/>
<dbReference type="PATRIC" id="fig|1411691.4.peg.626"/>
<dbReference type="EchoBASE" id="EB3698"/>
<dbReference type="eggNOG" id="COG3104">
    <property type="taxonomic scope" value="Bacteria"/>
</dbReference>
<dbReference type="HOGENOM" id="CLU_004790_0_0_6"/>
<dbReference type="InParanoid" id="P77304"/>
<dbReference type="OMA" id="QMMGVWF"/>
<dbReference type="OrthoDB" id="9772725at2"/>
<dbReference type="PhylomeDB" id="P77304"/>
<dbReference type="BioCyc" id="EcoCyc:B1634-MONOMER"/>
<dbReference type="BioCyc" id="MetaCyc:B1634-MONOMER"/>
<dbReference type="BRENDA" id="7.4.2.5">
    <property type="organism ID" value="2026"/>
</dbReference>
<dbReference type="PRO" id="PR:P77304"/>
<dbReference type="Proteomes" id="UP000000625">
    <property type="component" value="Chromosome"/>
</dbReference>
<dbReference type="GO" id="GO:0005886">
    <property type="term" value="C:plasma membrane"/>
    <property type="evidence" value="ECO:0000314"/>
    <property type="project" value="EcoCyc"/>
</dbReference>
<dbReference type="GO" id="GO:0071916">
    <property type="term" value="F:dipeptide transmembrane transporter activity"/>
    <property type="evidence" value="ECO:0000314"/>
    <property type="project" value="EcoCyc"/>
</dbReference>
<dbReference type="GO" id="GO:0015333">
    <property type="term" value="F:peptide:proton symporter activity"/>
    <property type="evidence" value="ECO:0000314"/>
    <property type="project" value="EcoCyc"/>
</dbReference>
<dbReference type="GO" id="GO:0042937">
    <property type="term" value="F:tripeptide transmembrane transporter activity"/>
    <property type="evidence" value="ECO:0000315"/>
    <property type="project" value="EcoCyc"/>
</dbReference>
<dbReference type="GO" id="GO:0035442">
    <property type="term" value="P:dipeptide transmembrane transport"/>
    <property type="evidence" value="ECO:0000314"/>
    <property type="project" value="EcoCyc"/>
</dbReference>
<dbReference type="GO" id="GO:0015031">
    <property type="term" value="P:protein transport"/>
    <property type="evidence" value="ECO:0007669"/>
    <property type="project" value="UniProtKB-KW"/>
</dbReference>
<dbReference type="GO" id="GO:0035443">
    <property type="term" value="P:tripeptide transmembrane transport"/>
    <property type="evidence" value="ECO:0000315"/>
    <property type="project" value="EcoCyc"/>
</dbReference>
<dbReference type="CDD" id="cd17346">
    <property type="entry name" value="MFS_DtpA_like"/>
    <property type="match status" value="1"/>
</dbReference>
<dbReference type="FunFam" id="1.20.1250.20:FF:000017">
    <property type="entry name" value="Dipeptide and tripeptide permease A"/>
    <property type="match status" value="1"/>
</dbReference>
<dbReference type="Gene3D" id="1.20.1250.20">
    <property type="entry name" value="MFS general substrate transporter like domains"/>
    <property type="match status" value="1"/>
</dbReference>
<dbReference type="HAMAP" id="MF_01878">
    <property type="entry name" value="PTR2_DtpA_subfam"/>
    <property type="match status" value="1"/>
</dbReference>
<dbReference type="InterPro" id="IPR023517">
    <property type="entry name" value="AA/pep_transptr_DtpA"/>
</dbReference>
<dbReference type="InterPro" id="IPR005279">
    <property type="entry name" value="Dipep/tripep_permease"/>
</dbReference>
<dbReference type="InterPro" id="IPR020846">
    <property type="entry name" value="MFS_dom"/>
</dbReference>
<dbReference type="InterPro" id="IPR036259">
    <property type="entry name" value="MFS_trans_sf"/>
</dbReference>
<dbReference type="InterPro" id="IPR050171">
    <property type="entry name" value="MFS_Transporters"/>
</dbReference>
<dbReference type="InterPro" id="IPR000109">
    <property type="entry name" value="POT_fam"/>
</dbReference>
<dbReference type="InterPro" id="IPR018456">
    <property type="entry name" value="PTR2_symporter_CS"/>
</dbReference>
<dbReference type="NCBIfam" id="NF007137">
    <property type="entry name" value="PRK09584.1"/>
    <property type="match status" value="1"/>
</dbReference>
<dbReference type="NCBIfam" id="TIGR00924">
    <property type="entry name" value="yjdL_sub1_fam"/>
    <property type="match status" value="1"/>
</dbReference>
<dbReference type="PANTHER" id="PTHR23517:SF15">
    <property type="entry name" value="PROTON-DEPENDENT OLIGOPEPTIDE FAMILY TRANSPORT PROTEIN"/>
    <property type="match status" value="1"/>
</dbReference>
<dbReference type="PANTHER" id="PTHR23517">
    <property type="entry name" value="RESISTANCE PROTEIN MDTM, PUTATIVE-RELATED-RELATED"/>
    <property type="match status" value="1"/>
</dbReference>
<dbReference type="Pfam" id="PF00854">
    <property type="entry name" value="PTR2"/>
    <property type="match status" value="1"/>
</dbReference>
<dbReference type="SUPFAM" id="SSF103473">
    <property type="entry name" value="MFS general substrate transporter"/>
    <property type="match status" value="1"/>
</dbReference>
<dbReference type="PROSITE" id="PS50850">
    <property type="entry name" value="MFS"/>
    <property type="match status" value="1"/>
</dbReference>
<dbReference type="PROSITE" id="PS01022">
    <property type="entry name" value="PTR2_1"/>
    <property type="match status" value="1"/>
</dbReference>
<dbReference type="PROSITE" id="PS01023">
    <property type="entry name" value="PTR2_2"/>
    <property type="match status" value="1"/>
</dbReference>